<comment type="function">
    <text evidence="1">Vacuolar effluxer which mediate the efflux of amino acids resulting from autophagic degradation. The release of autophagic amino acids allows the maintenance of protein synthesis and viability during nitrogen starvation (By similarity).</text>
</comment>
<comment type="subcellular location">
    <subcellularLocation>
        <location evidence="1">Vacuole membrane</location>
        <topology evidence="1">Multi-pass membrane protein</topology>
    </subcellularLocation>
    <text evidence="1">Vacuole and punctate structures.</text>
</comment>
<comment type="similarity">
    <text evidence="4">Belongs to the ATG22 family.</text>
</comment>
<sequence length="679" mass="75229">MAPRNPELPPTPLRHPQPQRPTIPRLFSRLSHASKRSFRSYSSSFEADDERSGSDSRSQFDSDSDSDMDTSTERGQSRERRCRRSYGGEQYADEDTRPTSEKELAGWYMYSFAAETYVICAISSFIPILLESLARENGVLLKDRTSPCKASYDKTPDGGNDDNQCVVHVLGMEINTASFAMYTFSVSVLLQALLVVSISCAADHGNYRKKLLLAFAWIGSFSVMAYIFVSKEIYLLGAILAIISNTSFGASFVLLNSFLPLLVRHHPRIEYAEPATGDDLDFESEDQMRNSASHLLADEHDDHYALSRVHTKEELTSIELQLSTEISAKGIGIGYCAGLFVQCIAIAIVFKLKNSTWSQRVVLLFVGAWWAIFTIPAAMWLRPRPGPPLPAASESSRGGVAAFVSYTLYAWKALFRTVSLARRLIDIVLFLGAWFLLSDAIATTSSTAILFAKTQLRMEPWALAMINVISTTAGIAGAFSWAFISRRLGLRPHQTILACIVLFELIPLYGLMGYLPFVKNWGVLGLQKPWEMFPLAAVYGFVLGGLSGYCRSLFGELIPPGSEAAFYALYAITDKGSSIFGPAIVGAIIDATEEIRPAFWFLAVMVGLPAPLIYFIDVDRGKVEGEKLAAVIEGYRRHQDESFDDGRFPSDDDDDGRGPILGGRDDEDEHDTEREVRGR</sequence>
<reference key="1">
    <citation type="journal article" date="2005" name="Nature">
        <title>The genome sequence of the rice blast fungus Magnaporthe grisea.</title>
        <authorList>
            <person name="Dean R.A."/>
            <person name="Talbot N.J."/>
            <person name="Ebbole D.J."/>
            <person name="Farman M.L."/>
            <person name="Mitchell T.K."/>
            <person name="Orbach M.J."/>
            <person name="Thon M.R."/>
            <person name="Kulkarni R."/>
            <person name="Xu J.-R."/>
            <person name="Pan H."/>
            <person name="Read N.D."/>
            <person name="Lee Y.-H."/>
            <person name="Carbone I."/>
            <person name="Brown D."/>
            <person name="Oh Y.Y."/>
            <person name="Donofrio N."/>
            <person name="Jeong J.S."/>
            <person name="Soanes D.M."/>
            <person name="Djonovic S."/>
            <person name="Kolomiets E."/>
            <person name="Rehmeyer C."/>
            <person name="Li W."/>
            <person name="Harding M."/>
            <person name="Kim S."/>
            <person name="Lebrun M.-H."/>
            <person name="Bohnert H."/>
            <person name="Coughlan S."/>
            <person name="Butler J."/>
            <person name="Calvo S.E."/>
            <person name="Ma L.-J."/>
            <person name="Nicol R."/>
            <person name="Purcell S."/>
            <person name="Nusbaum C."/>
            <person name="Galagan J.E."/>
            <person name="Birren B.W."/>
        </authorList>
    </citation>
    <scope>NUCLEOTIDE SEQUENCE [LARGE SCALE GENOMIC DNA]</scope>
    <source>
        <strain>70-15 / ATCC MYA-4617 / FGSC 8958</strain>
    </source>
</reference>
<gene>
    <name type="primary">ATG22</name>
    <name type="ORF">MGG_09904</name>
</gene>
<organism>
    <name type="scientific">Pyricularia oryzae (strain 70-15 / ATCC MYA-4617 / FGSC 8958)</name>
    <name type="common">Rice blast fungus</name>
    <name type="synonym">Magnaporthe oryzae</name>
    <dbReference type="NCBI Taxonomy" id="242507"/>
    <lineage>
        <taxon>Eukaryota</taxon>
        <taxon>Fungi</taxon>
        <taxon>Dikarya</taxon>
        <taxon>Ascomycota</taxon>
        <taxon>Pezizomycotina</taxon>
        <taxon>Sordariomycetes</taxon>
        <taxon>Sordariomycetidae</taxon>
        <taxon>Magnaporthales</taxon>
        <taxon>Pyriculariaceae</taxon>
        <taxon>Pyricularia</taxon>
    </lineage>
</organism>
<keyword id="KW-0029">Amino-acid transport</keyword>
<keyword id="KW-0072">Autophagy</keyword>
<keyword id="KW-0325">Glycoprotein</keyword>
<keyword id="KW-0472">Membrane</keyword>
<keyword id="KW-1185">Reference proteome</keyword>
<keyword id="KW-0812">Transmembrane</keyword>
<keyword id="KW-1133">Transmembrane helix</keyword>
<keyword id="KW-0813">Transport</keyword>
<keyword id="KW-0926">Vacuole</keyword>
<accession>Q51IZ9</accession>
<accession>A4R0M3</accession>
<accession>G4MR55</accession>
<dbReference type="EMBL" id="CM001231">
    <property type="protein sequence ID" value="EHA57387.1"/>
    <property type="molecule type" value="Genomic_DNA"/>
</dbReference>
<dbReference type="RefSeq" id="XP_003709999.1">
    <property type="nucleotide sequence ID" value="XM_003709951.1"/>
</dbReference>
<dbReference type="FunCoup" id="Q51IZ9">
    <property type="interactions" value="24"/>
</dbReference>
<dbReference type="STRING" id="242507.Q51IZ9"/>
<dbReference type="GlyCosmos" id="Q51IZ9">
    <property type="glycosylation" value="1 site, No reported glycans"/>
</dbReference>
<dbReference type="EnsemblFungi" id="MGG_09904T0">
    <property type="protein sequence ID" value="MGG_09904T0"/>
    <property type="gene ID" value="MGG_09904"/>
</dbReference>
<dbReference type="GeneID" id="2680874"/>
<dbReference type="KEGG" id="mgr:MGG_09904"/>
<dbReference type="VEuPathDB" id="FungiDB:MGG_09904"/>
<dbReference type="eggNOG" id="ENOG502QR9I">
    <property type="taxonomic scope" value="Eukaryota"/>
</dbReference>
<dbReference type="HOGENOM" id="CLU_017518_1_1_1"/>
<dbReference type="InParanoid" id="Q51IZ9"/>
<dbReference type="OMA" id="QQQWEMY"/>
<dbReference type="OrthoDB" id="192733at2759"/>
<dbReference type="Proteomes" id="UP000009058">
    <property type="component" value="Chromosome 1"/>
</dbReference>
<dbReference type="GO" id="GO:0005774">
    <property type="term" value="C:vacuolar membrane"/>
    <property type="evidence" value="ECO:0007669"/>
    <property type="project" value="UniProtKB-SubCell"/>
</dbReference>
<dbReference type="GO" id="GO:0032974">
    <property type="term" value="P:amino acid transmembrane export from vacuole"/>
    <property type="evidence" value="ECO:0007669"/>
    <property type="project" value="InterPro"/>
</dbReference>
<dbReference type="GO" id="GO:0006914">
    <property type="term" value="P:autophagy"/>
    <property type="evidence" value="ECO:0007669"/>
    <property type="project" value="UniProtKB-KW"/>
</dbReference>
<dbReference type="CDD" id="cd17483">
    <property type="entry name" value="MFS_Atg22_like"/>
    <property type="match status" value="1"/>
</dbReference>
<dbReference type="Gene3D" id="1.20.1250.20">
    <property type="entry name" value="MFS general substrate transporter like domains"/>
    <property type="match status" value="1"/>
</dbReference>
<dbReference type="InterPro" id="IPR044738">
    <property type="entry name" value="Atg22"/>
</dbReference>
<dbReference type="InterPro" id="IPR024671">
    <property type="entry name" value="Atg22-like"/>
</dbReference>
<dbReference type="InterPro" id="IPR050495">
    <property type="entry name" value="ATG22/LtaA_families"/>
</dbReference>
<dbReference type="InterPro" id="IPR036259">
    <property type="entry name" value="MFS_trans_sf"/>
</dbReference>
<dbReference type="PANTHER" id="PTHR23519">
    <property type="entry name" value="AUTOPHAGY-RELATED PROTEIN 22"/>
    <property type="match status" value="1"/>
</dbReference>
<dbReference type="PANTHER" id="PTHR23519:SF1">
    <property type="entry name" value="AUTOPHAGY-RELATED PROTEIN 22"/>
    <property type="match status" value="1"/>
</dbReference>
<dbReference type="Pfam" id="PF11700">
    <property type="entry name" value="ATG22"/>
    <property type="match status" value="1"/>
</dbReference>
<dbReference type="SUPFAM" id="SSF103473">
    <property type="entry name" value="MFS general substrate transporter"/>
    <property type="match status" value="1"/>
</dbReference>
<evidence type="ECO:0000250" key="1"/>
<evidence type="ECO:0000255" key="2"/>
<evidence type="ECO:0000256" key="3">
    <source>
        <dbReference type="SAM" id="MobiDB-lite"/>
    </source>
</evidence>
<evidence type="ECO:0000305" key="4"/>
<feature type="chain" id="PRO_0000207625" description="Autophagy-related protein 22">
    <location>
        <begin position="1"/>
        <end position="679"/>
    </location>
</feature>
<feature type="transmembrane region" description="Helical" evidence="2">
    <location>
        <begin position="110"/>
        <end position="130"/>
    </location>
</feature>
<feature type="transmembrane region" description="Helical" evidence="2">
    <location>
        <begin position="178"/>
        <end position="198"/>
    </location>
</feature>
<feature type="transmembrane region" description="Helical" evidence="2">
    <location>
        <begin position="211"/>
        <end position="229"/>
    </location>
</feature>
<feature type="transmembrane region" description="Helical" evidence="2">
    <location>
        <begin position="233"/>
        <end position="255"/>
    </location>
</feature>
<feature type="transmembrane region" description="Helical" evidence="2">
    <location>
        <begin position="330"/>
        <end position="350"/>
    </location>
</feature>
<feature type="transmembrane region" description="Helical" evidence="2">
    <location>
        <begin position="361"/>
        <end position="381"/>
    </location>
</feature>
<feature type="transmembrane region" description="Helical" evidence="2">
    <location>
        <begin position="398"/>
        <end position="420"/>
    </location>
</feature>
<feature type="transmembrane region" description="Helical" evidence="2">
    <location>
        <begin position="424"/>
        <end position="444"/>
    </location>
</feature>
<feature type="transmembrane region" description="Helical" evidence="2">
    <location>
        <begin position="464"/>
        <end position="484"/>
    </location>
</feature>
<feature type="transmembrane region" description="Helical" evidence="2">
    <location>
        <begin position="496"/>
        <end position="516"/>
    </location>
</feature>
<feature type="transmembrane region" description="Helical" evidence="2">
    <location>
        <begin position="530"/>
        <end position="550"/>
    </location>
</feature>
<feature type="transmembrane region" description="Helical" evidence="2">
    <location>
        <begin position="569"/>
        <end position="589"/>
    </location>
</feature>
<feature type="transmembrane region" description="Helical" evidence="2">
    <location>
        <begin position="598"/>
        <end position="618"/>
    </location>
</feature>
<feature type="region of interest" description="Disordered" evidence="3">
    <location>
        <begin position="1"/>
        <end position="98"/>
    </location>
</feature>
<feature type="region of interest" description="Disordered" evidence="3">
    <location>
        <begin position="638"/>
        <end position="679"/>
    </location>
</feature>
<feature type="compositionally biased region" description="Pro residues" evidence="3">
    <location>
        <begin position="1"/>
        <end position="21"/>
    </location>
</feature>
<feature type="compositionally biased region" description="Basic and acidic residues" evidence="3">
    <location>
        <begin position="50"/>
        <end position="60"/>
    </location>
</feature>
<feature type="compositionally biased region" description="Basic and acidic residues" evidence="3">
    <location>
        <begin position="638"/>
        <end position="650"/>
    </location>
</feature>
<feature type="glycosylation site" description="N-linked (GlcNAc...) asparagine" evidence="2">
    <location>
        <position position="354"/>
    </location>
</feature>
<protein>
    <recommendedName>
        <fullName>Autophagy-related protein 22</fullName>
    </recommendedName>
</protein>
<name>ATG22_PYRO7</name>
<proteinExistence type="inferred from homology"/>